<name>LEXA_SYNC1</name>
<comment type="function">
    <text evidence="1">Represses a number of genes involved in the response to DNA damage (SOS response), including recA and lexA. In the presence of single-stranded DNA, RecA interacts with LexA causing an autocatalytic cleavage which disrupts the DNA-binding part of LexA, leading to derepression of the SOS regulon and eventually DNA repair.</text>
</comment>
<comment type="catalytic activity">
    <reaction evidence="1">
        <text>Hydrolysis of Ala-|-Gly bond in repressor LexA.</text>
        <dbReference type="EC" id="3.4.21.88"/>
    </reaction>
</comment>
<comment type="subunit">
    <text evidence="1">Homodimer.</text>
</comment>
<comment type="similarity">
    <text evidence="1">Belongs to the peptidase S24 family.</text>
</comment>
<protein>
    <recommendedName>
        <fullName evidence="1">LexA repressor</fullName>
        <ecNumber evidence="1">3.4.21.88</ecNumber>
    </recommendedName>
</protein>
<reference key="1">
    <citation type="submission" date="2005-10" db="EMBL/GenBank/DDBJ databases">
        <title>Complete sequence of Pelobacter carbinolicus DSM 2380.</title>
        <authorList>
            <person name="Copeland A."/>
            <person name="Lucas S."/>
            <person name="Lapidus A."/>
            <person name="Barry K."/>
            <person name="Detter J.C."/>
            <person name="Glavina T."/>
            <person name="Hammon N."/>
            <person name="Israni S."/>
            <person name="Pitluck S."/>
            <person name="Chertkov O."/>
            <person name="Schmutz J."/>
            <person name="Larimer F."/>
            <person name="Land M."/>
            <person name="Kyrpides N."/>
            <person name="Ivanova N."/>
            <person name="Richardson P."/>
        </authorList>
    </citation>
    <scope>NUCLEOTIDE SEQUENCE [LARGE SCALE GENOMIC DNA]</scope>
    <source>
        <strain>DSM 2380 / NBRC 103641 / GraBd1</strain>
    </source>
</reference>
<proteinExistence type="inferred from homology"/>
<feature type="chain" id="PRO_1000001314" description="LexA repressor">
    <location>
        <begin position="1"/>
        <end position="202"/>
    </location>
</feature>
<feature type="DNA-binding region" description="H-T-H motif" evidence="1">
    <location>
        <begin position="28"/>
        <end position="48"/>
    </location>
</feature>
<feature type="active site" description="For autocatalytic cleavage activity" evidence="1">
    <location>
        <position position="120"/>
    </location>
</feature>
<feature type="active site" description="For autocatalytic cleavage activity" evidence="1">
    <location>
        <position position="157"/>
    </location>
</feature>
<feature type="site" description="Cleavage; by autolysis" evidence="1">
    <location>
        <begin position="86"/>
        <end position="87"/>
    </location>
</feature>
<gene>
    <name evidence="1" type="primary">lexA</name>
    <name type="ordered locus">Pcar_1739</name>
</gene>
<organism>
    <name type="scientific">Syntrophotalea carbinolica (strain DSM 2380 / NBRC 103641 / GraBd1)</name>
    <name type="common">Pelobacter carbinolicus</name>
    <dbReference type="NCBI Taxonomy" id="338963"/>
    <lineage>
        <taxon>Bacteria</taxon>
        <taxon>Pseudomonadati</taxon>
        <taxon>Thermodesulfobacteriota</taxon>
        <taxon>Desulfuromonadia</taxon>
        <taxon>Desulfuromonadales</taxon>
        <taxon>Syntrophotaleaceae</taxon>
        <taxon>Syntrophotalea</taxon>
    </lineage>
</organism>
<keyword id="KW-0068">Autocatalytic cleavage</keyword>
<keyword id="KW-0227">DNA damage</keyword>
<keyword id="KW-0234">DNA repair</keyword>
<keyword id="KW-0235">DNA replication</keyword>
<keyword id="KW-0238">DNA-binding</keyword>
<keyword id="KW-0378">Hydrolase</keyword>
<keyword id="KW-1185">Reference proteome</keyword>
<keyword id="KW-0678">Repressor</keyword>
<keyword id="KW-0742">SOS response</keyword>
<keyword id="KW-0804">Transcription</keyword>
<keyword id="KW-0805">Transcription regulation</keyword>
<sequence>MSPLTPKQKQVFDYIARHIGEQGFAPSQQEIARAFGFRSLGTVRNYLVRLEREGLLERNWNARRGLQLRTASERGMKLPLAGTVAAGKPIEAIEIPDVIEVPPTMVGSGEHFVLRVAGDSMIGDGIIDGDYVVVRKQATAEHGQTVVALLDNEATVKRLHRRNDRIELHPANPSMQPIVVTDPDNFRIEGVVVGVIRHYRSA</sequence>
<evidence type="ECO:0000255" key="1">
    <source>
        <dbReference type="HAMAP-Rule" id="MF_00015"/>
    </source>
</evidence>
<accession>Q3A3S5</accession>
<dbReference type="EC" id="3.4.21.88" evidence="1"/>
<dbReference type="EMBL" id="CP000142">
    <property type="protein sequence ID" value="ABA88982.1"/>
    <property type="molecule type" value="Genomic_DNA"/>
</dbReference>
<dbReference type="RefSeq" id="WP_011341474.1">
    <property type="nucleotide sequence ID" value="NC_007498.2"/>
</dbReference>
<dbReference type="SMR" id="Q3A3S5"/>
<dbReference type="STRING" id="338963.Pcar_1739"/>
<dbReference type="MEROPS" id="S24.001"/>
<dbReference type="KEGG" id="pca:Pcar_1739"/>
<dbReference type="eggNOG" id="COG1974">
    <property type="taxonomic scope" value="Bacteria"/>
</dbReference>
<dbReference type="HOGENOM" id="CLU_066192_45_1_7"/>
<dbReference type="OrthoDB" id="9802364at2"/>
<dbReference type="Proteomes" id="UP000002534">
    <property type="component" value="Chromosome"/>
</dbReference>
<dbReference type="GO" id="GO:0003677">
    <property type="term" value="F:DNA binding"/>
    <property type="evidence" value="ECO:0007669"/>
    <property type="project" value="UniProtKB-UniRule"/>
</dbReference>
<dbReference type="GO" id="GO:0004252">
    <property type="term" value="F:serine-type endopeptidase activity"/>
    <property type="evidence" value="ECO:0007669"/>
    <property type="project" value="UniProtKB-UniRule"/>
</dbReference>
<dbReference type="GO" id="GO:0006281">
    <property type="term" value="P:DNA repair"/>
    <property type="evidence" value="ECO:0007669"/>
    <property type="project" value="UniProtKB-UniRule"/>
</dbReference>
<dbReference type="GO" id="GO:0006260">
    <property type="term" value="P:DNA replication"/>
    <property type="evidence" value="ECO:0007669"/>
    <property type="project" value="UniProtKB-UniRule"/>
</dbReference>
<dbReference type="GO" id="GO:0045892">
    <property type="term" value="P:negative regulation of DNA-templated transcription"/>
    <property type="evidence" value="ECO:0007669"/>
    <property type="project" value="UniProtKB-UniRule"/>
</dbReference>
<dbReference type="GO" id="GO:0006508">
    <property type="term" value="P:proteolysis"/>
    <property type="evidence" value="ECO:0007669"/>
    <property type="project" value="InterPro"/>
</dbReference>
<dbReference type="GO" id="GO:0009432">
    <property type="term" value="P:SOS response"/>
    <property type="evidence" value="ECO:0007669"/>
    <property type="project" value="UniProtKB-UniRule"/>
</dbReference>
<dbReference type="CDD" id="cd06529">
    <property type="entry name" value="S24_LexA-like"/>
    <property type="match status" value="1"/>
</dbReference>
<dbReference type="FunFam" id="2.10.109.10:FF:000001">
    <property type="entry name" value="LexA repressor"/>
    <property type="match status" value="1"/>
</dbReference>
<dbReference type="Gene3D" id="2.10.109.10">
    <property type="entry name" value="Umud Fragment, subunit A"/>
    <property type="match status" value="1"/>
</dbReference>
<dbReference type="Gene3D" id="1.10.10.10">
    <property type="entry name" value="Winged helix-like DNA-binding domain superfamily/Winged helix DNA-binding domain"/>
    <property type="match status" value="1"/>
</dbReference>
<dbReference type="HAMAP" id="MF_00015">
    <property type="entry name" value="LexA"/>
    <property type="match status" value="1"/>
</dbReference>
<dbReference type="InterPro" id="IPR006200">
    <property type="entry name" value="LexA"/>
</dbReference>
<dbReference type="InterPro" id="IPR039418">
    <property type="entry name" value="LexA-like"/>
</dbReference>
<dbReference type="InterPro" id="IPR036286">
    <property type="entry name" value="LexA/Signal_pep-like_sf"/>
</dbReference>
<dbReference type="InterPro" id="IPR006199">
    <property type="entry name" value="LexA_DNA-bd_dom"/>
</dbReference>
<dbReference type="InterPro" id="IPR050077">
    <property type="entry name" value="LexA_repressor"/>
</dbReference>
<dbReference type="InterPro" id="IPR006197">
    <property type="entry name" value="Peptidase_S24_LexA"/>
</dbReference>
<dbReference type="InterPro" id="IPR015927">
    <property type="entry name" value="Peptidase_S24_S26A/B/C"/>
</dbReference>
<dbReference type="InterPro" id="IPR036388">
    <property type="entry name" value="WH-like_DNA-bd_sf"/>
</dbReference>
<dbReference type="InterPro" id="IPR036390">
    <property type="entry name" value="WH_DNA-bd_sf"/>
</dbReference>
<dbReference type="NCBIfam" id="TIGR00498">
    <property type="entry name" value="lexA"/>
    <property type="match status" value="1"/>
</dbReference>
<dbReference type="PANTHER" id="PTHR33516">
    <property type="entry name" value="LEXA REPRESSOR"/>
    <property type="match status" value="1"/>
</dbReference>
<dbReference type="PANTHER" id="PTHR33516:SF2">
    <property type="entry name" value="LEXA REPRESSOR-RELATED"/>
    <property type="match status" value="1"/>
</dbReference>
<dbReference type="Pfam" id="PF01726">
    <property type="entry name" value="LexA_DNA_bind"/>
    <property type="match status" value="1"/>
</dbReference>
<dbReference type="Pfam" id="PF00717">
    <property type="entry name" value="Peptidase_S24"/>
    <property type="match status" value="1"/>
</dbReference>
<dbReference type="PRINTS" id="PR00726">
    <property type="entry name" value="LEXASERPTASE"/>
</dbReference>
<dbReference type="SUPFAM" id="SSF51306">
    <property type="entry name" value="LexA/Signal peptidase"/>
    <property type="match status" value="1"/>
</dbReference>
<dbReference type="SUPFAM" id="SSF46785">
    <property type="entry name" value="Winged helix' DNA-binding domain"/>
    <property type="match status" value="1"/>
</dbReference>